<feature type="chain" id="PRO_0000061191" description="Cytochrome b">
    <location>
        <begin position="1"/>
        <end position="380"/>
    </location>
</feature>
<feature type="transmembrane region" description="Helical" evidence="2">
    <location>
        <begin position="33"/>
        <end position="53"/>
    </location>
</feature>
<feature type="transmembrane region" description="Helical" evidence="2">
    <location>
        <begin position="77"/>
        <end position="98"/>
    </location>
</feature>
<feature type="transmembrane region" description="Helical" evidence="2">
    <location>
        <begin position="113"/>
        <end position="133"/>
    </location>
</feature>
<feature type="transmembrane region" description="Helical" evidence="2">
    <location>
        <begin position="178"/>
        <end position="198"/>
    </location>
</feature>
<feature type="transmembrane region" description="Helical" evidence="2">
    <location>
        <begin position="226"/>
        <end position="246"/>
    </location>
</feature>
<feature type="transmembrane region" description="Helical" evidence="2">
    <location>
        <begin position="288"/>
        <end position="308"/>
    </location>
</feature>
<feature type="transmembrane region" description="Helical" evidence="2">
    <location>
        <begin position="320"/>
        <end position="340"/>
    </location>
</feature>
<feature type="transmembrane region" description="Helical" evidence="2">
    <location>
        <begin position="347"/>
        <end position="367"/>
    </location>
</feature>
<feature type="binding site" description="axial binding residue" evidence="2">
    <location>
        <position position="83"/>
    </location>
    <ligand>
        <name>heme b</name>
        <dbReference type="ChEBI" id="CHEBI:60344"/>
        <label>b562</label>
    </ligand>
    <ligandPart>
        <name>Fe</name>
        <dbReference type="ChEBI" id="CHEBI:18248"/>
    </ligandPart>
</feature>
<feature type="binding site" description="axial binding residue" evidence="2">
    <location>
        <position position="97"/>
    </location>
    <ligand>
        <name>heme b</name>
        <dbReference type="ChEBI" id="CHEBI:60344"/>
        <label>b566</label>
    </ligand>
    <ligandPart>
        <name>Fe</name>
        <dbReference type="ChEBI" id="CHEBI:18248"/>
    </ligandPart>
</feature>
<feature type="binding site" description="axial binding residue" evidence="2">
    <location>
        <position position="182"/>
    </location>
    <ligand>
        <name>heme b</name>
        <dbReference type="ChEBI" id="CHEBI:60344"/>
        <label>b562</label>
    </ligand>
    <ligandPart>
        <name>Fe</name>
        <dbReference type="ChEBI" id="CHEBI:18248"/>
    </ligandPart>
</feature>
<feature type="binding site" description="axial binding residue" evidence="2">
    <location>
        <position position="196"/>
    </location>
    <ligand>
        <name>heme b</name>
        <dbReference type="ChEBI" id="CHEBI:60344"/>
        <label>b566</label>
    </ligand>
    <ligandPart>
        <name>Fe</name>
        <dbReference type="ChEBI" id="CHEBI:18248"/>
    </ligandPart>
</feature>
<feature type="binding site" evidence="2">
    <location>
        <position position="201"/>
    </location>
    <ligand>
        <name>a ubiquinone</name>
        <dbReference type="ChEBI" id="CHEBI:16389"/>
    </ligand>
</feature>
<proteinExistence type="inferred from homology"/>
<comment type="function">
    <text evidence="2">Component of the ubiquinol-cytochrome c reductase complex (complex III or cytochrome b-c1 complex) that is part of the mitochondrial respiratory chain. The b-c1 complex mediates electron transfer from ubiquinol to cytochrome c. Contributes to the generation of a proton gradient across the mitochondrial membrane that is then used for ATP synthesis.</text>
</comment>
<comment type="cofactor">
    <cofactor evidence="2">
        <name>heme b</name>
        <dbReference type="ChEBI" id="CHEBI:60344"/>
    </cofactor>
    <text evidence="2">Binds 2 heme b groups non-covalently.</text>
</comment>
<comment type="subunit">
    <text evidence="2">The cytochrome bc1 complex contains 11 subunits: 3 respiratory subunits (MT-CYB, CYC1 and UQCRFS1), 2 core proteins (UQCRC1 and UQCRC2) and 6 low-molecular weight proteins (UQCRH/QCR6, UQCRB/QCR7, UQCRQ/QCR8, UQCR10/QCR9, UQCR11/QCR10 and a cleavage product of UQCRFS1). This cytochrome bc1 complex then forms a dimer.</text>
</comment>
<comment type="subcellular location">
    <subcellularLocation>
        <location evidence="2">Mitochondrion inner membrane</location>
        <topology evidence="2">Multi-pass membrane protein</topology>
    </subcellularLocation>
</comment>
<comment type="miscellaneous">
    <text evidence="1">Heme 1 (or BL or b562) is low-potential and absorbs at about 562 nm, and heme 2 (or BH or b566) is high-potential and absorbs at about 566 nm.</text>
</comment>
<comment type="similarity">
    <text evidence="3 4">Belongs to the cytochrome b family.</text>
</comment>
<comment type="caution">
    <text evidence="2">The full-length protein contains only eight transmembrane helices, not nine as predicted by bioinformatics tools.</text>
</comment>
<dbReference type="EMBL" id="AF163907">
    <property type="protein sequence ID" value="AAF24199.1"/>
    <property type="molecule type" value="Genomic_DNA"/>
</dbReference>
<dbReference type="SMR" id="Q9T7L5"/>
<dbReference type="GO" id="GO:0005743">
    <property type="term" value="C:mitochondrial inner membrane"/>
    <property type="evidence" value="ECO:0007669"/>
    <property type="project" value="UniProtKB-SubCell"/>
</dbReference>
<dbReference type="GO" id="GO:0045275">
    <property type="term" value="C:respiratory chain complex III"/>
    <property type="evidence" value="ECO:0007669"/>
    <property type="project" value="InterPro"/>
</dbReference>
<dbReference type="GO" id="GO:0046872">
    <property type="term" value="F:metal ion binding"/>
    <property type="evidence" value="ECO:0007669"/>
    <property type="project" value="UniProtKB-KW"/>
</dbReference>
<dbReference type="GO" id="GO:0008121">
    <property type="term" value="F:ubiquinol-cytochrome-c reductase activity"/>
    <property type="evidence" value="ECO:0007669"/>
    <property type="project" value="InterPro"/>
</dbReference>
<dbReference type="GO" id="GO:0006122">
    <property type="term" value="P:mitochondrial electron transport, ubiquinol to cytochrome c"/>
    <property type="evidence" value="ECO:0007669"/>
    <property type="project" value="TreeGrafter"/>
</dbReference>
<dbReference type="CDD" id="cd00290">
    <property type="entry name" value="cytochrome_b_C"/>
    <property type="match status" value="1"/>
</dbReference>
<dbReference type="CDD" id="cd00284">
    <property type="entry name" value="Cytochrome_b_N"/>
    <property type="match status" value="1"/>
</dbReference>
<dbReference type="FunFam" id="1.20.810.10:FF:000002">
    <property type="entry name" value="Cytochrome b"/>
    <property type="match status" value="1"/>
</dbReference>
<dbReference type="Gene3D" id="1.20.810.10">
    <property type="entry name" value="Cytochrome Bc1 Complex, Chain C"/>
    <property type="match status" value="1"/>
</dbReference>
<dbReference type="InterPro" id="IPR005798">
    <property type="entry name" value="Cyt_b/b6_C"/>
</dbReference>
<dbReference type="InterPro" id="IPR036150">
    <property type="entry name" value="Cyt_b/b6_C_sf"/>
</dbReference>
<dbReference type="InterPro" id="IPR005797">
    <property type="entry name" value="Cyt_b/b6_N"/>
</dbReference>
<dbReference type="InterPro" id="IPR027387">
    <property type="entry name" value="Cytb/b6-like_sf"/>
</dbReference>
<dbReference type="InterPro" id="IPR030689">
    <property type="entry name" value="Cytochrome_b"/>
</dbReference>
<dbReference type="InterPro" id="IPR048260">
    <property type="entry name" value="Cytochrome_b_C_euk/bac"/>
</dbReference>
<dbReference type="InterPro" id="IPR048259">
    <property type="entry name" value="Cytochrome_b_N_euk/bac"/>
</dbReference>
<dbReference type="InterPro" id="IPR016174">
    <property type="entry name" value="Di-haem_cyt_TM"/>
</dbReference>
<dbReference type="PANTHER" id="PTHR19271">
    <property type="entry name" value="CYTOCHROME B"/>
    <property type="match status" value="1"/>
</dbReference>
<dbReference type="PANTHER" id="PTHR19271:SF16">
    <property type="entry name" value="CYTOCHROME B"/>
    <property type="match status" value="1"/>
</dbReference>
<dbReference type="Pfam" id="PF00032">
    <property type="entry name" value="Cytochrom_B_C"/>
    <property type="match status" value="1"/>
</dbReference>
<dbReference type="Pfam" id="PF00033">
    <property type="entry name" value="Cytochrome_B"/>
    <property type="match status" value="1"/>
</dbReference>
<dbReference type="PIRSF" id="PIRSF038885">
    <property type="entry name" value="COB"/>
    <property type="match status" value="1"/>
</dbReference>
<dbReference type="SUPFAM" id="SSF81648">
    <property type="entry name" value="a domain/subunit of cytochrome bc1 complex (Ubiquinol-cytochrome c reductase)"/>
    <property type="match status" value="1"/>
</dbReference>
<dbReference type="SUPFAM" id="SSF81342">
    <property type="entry name" value="Transmembrane di-heme cytochromes"/>
    <property type="match status" value="1"/>
</dbReference>
<dbReference type="PROSITE" id="PS51003">
    <property type="entry name" value="CYTB_CTER"/>
    <property type="match status" value="1"/>
</dbReference>
<dbReference type="PROSITE" id="PS51002">
    <property type="entry name" value="CYTB_NTER"/>
    <property type="match status" value="1"/>
</dbReference>
<geneLocation type="mitochondrion"/>
<accession>Q9T7L5</accession>
<gene>
    <name type="primary">MT-CYB</name>
    <name type="synonym">COB</name>
    <name type="synonym">CYTB</name>
    <name type="synonym">MTCYB</name>
</gene>
<organism>
    <name type="scientific">Microtus xanthognathus</name>
    <name type="common">Yellow-cheeked vole</name>
    <name type="synonym">Taiga vole</name>
    <dbReference type="NCBI Taxonomy" id="10054"/>
    <lineage>
        <taxon>Eukaryota</taxon>
        <taxon>Metazoa</taxon>
        <taxon>Chordata</taxon>
        <taxon>Craniata</taxon>
        <taxon>Vertebrata</taxon>
        <taxon>Euteleostomi</taxon>
        <taxon>Mammalia</taxon>
        <taxon>Eutheria</taxon>
        <taxon>Euarchontoglires</taxon>
        <taxon>Glires</taxon>
        <taxon>Rodentia</taxon>
        <taxon>Myomorpha</taxon>
        <taxon>Muroidea</taxon>
        <taxon>Cricetidae</taxon>
        <taxon>Arvicolinae</taxon>
        <taxon>Microtus</taxon>
    </lineage>
</organism>
<protein>
    <recommendedName>
        <fullName>Cytochrome b</fullName>
    </recommendedName>
    <alternativeName>
        <fullName>Complex III subunit 3</fullName>
    </alternativeName>
    <alternativeName>
        <fullName>Complex III subunit III</fullName>
    </alternativeName>
    <alternativeName>
        <fullName>Cytochrome b-c1 complex subunit 3</fullName>
    </alternativeName>
    <alternativeName>
        <fullName>Ubiquinol-cytochrome-c reductase complex cytochrome b subunit</fullName>
    </alternativeName>
</protein>
<keyword id="KW-0249">Electron transport</keyword>
<keyword id="KW-0349">Heme</keyword>
<keyword id="KW-0408">Iron</keyword>
<keyword id="KW-0472">Membrane</keyword>
<keyword id="KW-0479">Metal-binding</keyword>
<keyword id="KW-0496">Mitochondrion</keyword>
<keyword id="KW-0999">Mitochondrion inner membrane</keyword>
<keyword id="KW-0679">Respiratory chain</keyword>
<keyword id="KW-0812">Transmembrane</keyword>
<keyword id="KW-1133">Transmembrane helix</keyword>
<keyword id="KW-0813">Transport</keyword>
<keyword id="KW-0830">Ubiquinone</keyword>
<name>CYB_MICXA</name>
<evidence type="ECO:0000250" key="1"/>
<evidence type="ECO:0000250" key="2">
    <source>
        <dbReference type="UniProtKB" id="P00157"/>
    </source>
</evidence>
<evidence type="ECO:0000255" key="3">
    <source>
        <dbReference type="PROSITE-ProRule" id="PRU00967"/>
    </source>
</evidence>
<evidence type="ECO:0000255" key="4">
    <source>
        <dbReference type="PROSITE-ProRule" id="PRU00968"/>
    </source>
</evidence>
<sequence>MTVIRKKHPLIKIINHSFIDLPTPSNISSWWNFGSLLGLCLIVQILTGLFLAMHYTSDTTTAFSSVAHICRDVNYGWLIRYMHANGASMFFICLFLHVGRGVYYGSYNMIETWNMGIILLFAVMATAFMGYVLPWGQMSFWGATVITNLLSAIPYIGTTLVEWIWGGFSVDKATLTRFFAFHFILPFIITALVLVHLLFLHETGSNNPTGLNSDADKIPFHPYYTMKDFLGALILLMALMILTLFFPDILGDPDNYTPANPLNTPPHIKPEWYFLFAYAILRSIPNKLGGVLALILSILILALMPLLHTSKQRTLTFRPITQTMYWILVADLLILTWIGGQPVEYPFIIIGQTASIAYFTIIVILMPMAGTIENNILDLD</sequence>
<reference key="1">
    <citation type="journal article" date="2000" name="J. Mammal.">
        <title>Molecular systematics of a holarctic rodent (Microtus, Muridae).</title>
        <authorList>
            <person name="Conroy C.J."/>
            <person name="Cook J.A."/>
        </authorList>
    </citation>
    <scope>NUCLEOTIDE SEQUENCE [GENOMIC DNA]</scope>
    <source>
        <strain>Isolate AF 3401</strain>
    </source>
</reference>